<accession>A0A098E171</accession>
<accession>A0A0E0SN27</accession>
<feature type="chain" id="PRO_0000450174" description="Oxidoreductase chry3">
    <location>
        <begin position="1"/>
        <end position="379"/>
    </location>
</feature>
<feature type="region of interest" description="Disordered" evidence="1">
    <location>
        <begin position="1"/>
        <end position="23"/>
    </location>
</feature>
<feature type="region of interest" description="Disordered" evidence="1">
    <location>
        <begin position="126"/>
        <end position="150"/>
    </location>
</feature>
<feature type="compositionally biased region" description="Acidic residues" evidence="1">
    <location>
        <begin position="126"/>
        <end position="138"/>
    </location>
</feature>
<keyword id="KW-0560">Oxidoreductase</keyword>
<keyword id="KW-1185">Reference proteome</keyword>
<comment type="function">
    <text evidence="2 5">Oxidoreductase; part of the gene cluster that mediates the biosynthesis of the yellow pigment chrysogine (PubMed:28708398). Pyruvic acid and anthranilic acid are likely substrates for the nonribosomal peptide synthetase chry1/NRPS14, with pyruvic acid adenylated by the first A domain and anthranilic acid by the second (Probable). If pyruvic acid and anthranilic acid are merged and released from chry1/NRPS14 by hydrolysis, a subsequent amidation would lead to 2-pyruvoylaminobenzamide (Probable). This process is probably catalyzed by the amidotransferase chry2 using glutamine as amino donor (Probable). The dehydrogenase chry5 that has a terminal berberine bridge domain for C-N cyclization could catalyze the cyclization of 2-pyruvoylaminobenzamide to yield acetyl-4(3H)-quinazolidinone (Probable). A final reduction of acetyl-4(3H)-quinazolidinone catalyzed by the oxidoreductase chry4 would result in chrysogine (Probable).</text>
</comment>
<comment type="pathway">
    <text evidence="5">Pigment biosynthesis.</text>
</comment>
<comment type="similarity">
    <text evidence="4">Belongs to the asaB hydroxylase/desaturase family.</text>
</comment>
<organism>
    <name type="scientific">Gibberella zeae (strain ATCC MYA-4620 / CBS 123657 / FGSC 9075 / NRRL 31084 / PH-1)</name>
    <name type="common">Wheat head blight fungus</name>
    <name type="synonym">Fusarium graminearum</name>
    <dbReference type="NCBI Taxonomy" id="229533"/>
    <lineage>
        <taxon>Eukaryota</taxon>
        <taxon>Fungi</taxon>
        <taxon>Dikarya</taxon>
        <taxon>Ascomycota</taxon>
        <taxon>Pezizomycotina</taxon>
        <taxon>Sordariomycetes</taxon>
        <taxon>Hypocreomycetidae</taxon>
        <taxon>Hypocreales</taxon>
        <taxon>Nectriaceae</taxon>
        <taxon>Fusarium</taxon>
    </lineage>
</organism>
<gene>
    <name evidence="3" type="primary">chry3</name>
    <name type="ORF">FG11397</name>
    <name type="ORF">FGRAMPH1_01T21963</name>
</gene>
<proteinExistence type="inferred from homology"/>
<dbReference type="EC" id="1.-.-.-" evidence="5"/>
<dbReference type="EMBL" id="HG970334">
    <property type="protein sequence ID" value="CEF87840.1"/>
    <property type="molecule type" value="Genomic_DNA"/>
</dbReference>
<dbReference type="SMR" id="A0A098E171"/>
<dbReference type="VEuPathDB" id="FungiDB:FGRAMPH1_01G21963"/>
<dbReference type="eggNOG" id="ENOG502SKC4">
    <property type="taxonomic scope" value="Eukaryota"/>
</dbReference>
<dbReference type="InParanoid" id="A0A098E171"/>
<dbReference type="Proteomes" id="UP000070720">
    <property type="component" value="Chromosome 3"/>
</dbReference>
<dbReference type="GO" id="GO:0016491">
    <property type="term" value="F:oxidoreductase activity"/>
    <property type="evidence" value="ECO:0007669"/>
    <property type="project" value="UniProtKB-KW"/>
</dbReference>
<dbReference type="InterPro" id="IPR044053">
    <property type="entry name" value="AsaB-like"/>
</dbReference>
<dbReference type="NCBIfam" id="NF041278">
    <property type="entry name" value="CmcJ_NvfI_EfuI"/>
    <property type="match status" value="1"/>
</dbReference>
<dbReference type="PANTHER" id="PTHR34598">
    <property type="entry name" value="BLL6449 PROTEIN"/>
    <property type="match status" value="1"/>
</dbReference>
<dbReference type="PANTHER" id="PTHR34598:SF3">
    <property type="entry name" value="OXIDOREDUCTASE AN1597"/>
    <property type="match status" value="1"/>
</dbReference>
<name>CHRY3_GIBZE</name>
<evidence type="ECO:0000256" key="1">
    <source>
        <dbReference type="SAM" id="MobiDB-lite"/>
    </source>
</evidence>
<evidence type="ECO:0000269" key="2">
    <source>
    </source>
</evidence>
<evidence type="ECO:0000303" key="3">
    <source>
    </source>
</evidence>
<evidence type="ECO:0000305" key="4"/>
<evidence type="ECO:0000305" key="5">
    <source>
    </source>
</evidence>
<protein>
    <recommendedName>
        <fullName evidence="3">Oxidoreductase chry3</fullName>
        <ecNumber evidence="5">1.-.-.-</ecNumber>
    </recommendedName>
    <alternativeName>
        <fullName evidence="3">Chrysogine biosynthesis cluster protein 3</fullName>
    </alternativeName>
</protein>
<reference key="1">
    <citation type="journal article" date="2007" name="Science">
        <title>The Fusarium graminearum genome reveals a link between localized polymorphism and pathogen specialization.</title>
        <authorList>
            <person name="Cuomo C.A."/>
            <person name="Gueldener U."/>
            <person name="Xu J.-R."/>
            <person name="Trail F."/>
            <person name="Turgeon B.G."/>
            <person name="Di Pietro A."/>
            <person name="Walton J.D."/>
            <person name="Ma L.-J."/>
            <person name="Baker S.E."/>
            <person name="Rep M."/>
            <person name="Adam G."/>
            <person name="Antoniw J."/>
            <person name="Baldwin T."/>
            <person name="Calvo S.E."/>
            <person name="Chang Y.-L."/>
            <person name="DeCaprio D."/>
            <person name="Gale L.R."/>
            <person name="Gnerre S."/>
            <person name="Goswami R.S."/>
            <person name="Hammond-Kosack K."/>
            <person name="Harris L.J."/>
            <person name="Hilburn K."/>
            <person name="Kennell J.C."/>
            <person name="Kroken S."/>
            <person name="Magnuson J.K."/>
            <person name="Mannhaupt G."/>
            <person name="Mauceli E.W."/>
            <person name="Mewes H.-W."/>
            <person name="Mitterbauer R."/>
            <person name="Muehlbauer G."/>
            <person name="Muensterkoetter M."/>
            <person name="Nelson D."/>
            <person name="O'Donnell K."/>
            <person name="Ouellet T."/>
            <person name="Qi W."/>
            <person name="Quesneville H."/>
            <person name="Roncero M.I.G."/>
            <person name="Seong K.-Y."/>
            <person name="Tetko I.V."/>
            <person name="Urban M."/>
            <person name="Waalwijk C."/>
            <person name="Ward T.J."/>
            <person name="Yao J."/>
            <person name="Birren B.W."/>
            <person name="Kistler H.C."/>
        </authorList>
    </citation>
    <scope>NUCLEOTIDE SEQUENCE [LARGE SCALE GENOMIC DNA]</scope>
    <source>
        <strain>ATCC MYA-4620 / CBS 123657 / FGSC 9075 / NRRL 31084 / PH-1</strain>
    </source>
</reference>
<reference key="2">
    <citation type="journal article" date="2010" name="Nature">
        <title>Comparative genomics reveals mobile pathogenicity chromosomes in Fusarium.</title>
        <authorList>
            <person name="Ma L.-J."/>
            <person name="van der Does H.C."/>
            <person name="Borkovich K.A."/>
            <person name="Coleman J.J."/>
            <person name="Daboussi M.-J."/>
            <person name="Di Pietro A."/>
            <person name="Dufresne M."/>
            <person name="Freitag M."/>
            <person name="Grabherr M."/>
            <person name="Henrissat B."/>
            <person name="Houterman P.M."/>
            <person name="Kang S."/>
            <person name="Shim W.-B."/>
            <person name="Woloshuk C."/>
            <person name="Xie X."/>
            <person name="Xu J.-R."/>
            <person name="Antoniw J."/>
            <person name="Baker S.E."/>
            <person name="Bluhm B.H."/>
            <person name="Breakspear A."/>
            <person name="Brown D.W."/>
            <person name="Butchko R.A.E."/>
            <person name="Chapman S."/>
            <person name="Coulson R."/>
            <person name="Coutinho P.M."/>
            <person name="Danchin E.G.J."/>
            <person name="Diener A."/>
            <person name="Gale L.R."/>
            <person name="Gardiner D.M."/>
            <person name="Goff S."/>
            <person name="Hammond-Kosack K.E."/>
            <person name="Hilburn K."/>
            <person name="Hua-Van A."/>
            <person name="Jonkers W."/>
            <person name="Kazan K."/>
            <person name="Kodira C.D."/>
            <person name="Koehrsen M."/>
            <person name="Kumar L."/>
            <person name="Lee Y.-H."/>
            <person name="Li L."/>
            <person name="Manners J.M."/>
            <person name="Miranda-Saavedra D."/>
            <person name="Mukherjee M."/>
            <person name="Park G."/>
            <person name="Park J."/>
            <person name="Park S.-Y."/>
            <person name="Proctor R.H."/>
            <person name="Regev A."/>
            <person name="Ruiz-Roldan M.C."/>
            <person name="Sain D."/>
            <person name="Sakthikumar S."/>
            <person name="Sykes S."/>
            <person name="Schwartz D.C."/>
            <person name="Turgeon B.G."/>
            <person name="Wapinski I."/>
            <person name="Yoder O."/>
            <person name="Young S."/>
            <person name="Zeng Q."/>
            <person name="Zhou S."/>
            <person name="Galagan J."/>
            <person name="Cuomo C.A."/>
            <person name="Kistler H.C."/>
            <person name="Rep M."/>
        </authorList>
    </citation>
    <scope>GENOME REANNOTATION</scope>
    <source>
        <strain>ATCC MYA-4620 / CBS 123657 / FGSC 9075 / NRRL 31084 / PH-1</strain>
    </source>
</reference>
<reference key="3">
    <citation type="journal article" date="2015" name="BMC Genomics">
        <title>The completed genome sequence of the pathogenic ascomycete fungus Fusarium graminearum.</title>
        <authorList>
            <person name="King R."/>
            <person name="Urban M."/>
            <person name="Hammond-Kosack M.C.U."/>
            <person name="Hassani-Pak K."/>
            <person name="Hammond-Kosack K.E."/>
        </authorList>
    </citation>
    <scope>NUCLEOTIDE SEQUENCE [LARGE SCALE GENOMIC DNA]</scope>
    <source>
        <strain>ATCC MYA-4620 / CBS 123657 / FGSC 9075 / NRRL 31084 / PH-1</strain>
    </source>
</reference>
<reference key="4">
    <citation type="journal article" date="2017" name="J. Nat. Prod.">
        <title>Chrysogine biosynthesis is mediated by a two-module nonribosomal peptide synthetase.</title>
        <authorList>
            <person name="Wollenberg R.D."/>
            <person name="Saei W."/>
            <person name="Westphal K.R."/>
            <person name="Klitgaard C.S."/>
            <person name="Nielsen K.L."/>
            <person name="Lysoee E."/>
            <person name="Gardiner D.M."/>
            <person name="Wimmer R."/>
            <person name="Sondergaard T.E."/>
            <person name="Soerensen J.L."/>
        </authorList>
    </citation>
    <scope>FUNCTION</scope>
    <scope>PATHWAY</scope>
</reference>
<sequence length="379" mass="42272">MTTATKPHQGRFRYLTRGSQPTPSKEAYLLPSLSEFGDIVTLPLTDLRPSLDLGQDSPYKLDVHGFTARRHDSALHSAPYSRASWNNEKLLRQIYFPEVEEFVKNVTGCKKAVVSAAVVRNRLYSEGDDSAPAEEEADTQASSSDDTSHMFPPIFGNSVKDGVCPAPKVHLDCTPKGARHHIRRYHSEVALAAEKVIEAENRLLESGVEWNDLKDHSGKVPHFALFSIWRPLKTVHRDPLALSSAASFPVSDYVPCDQREPTDHSIPSHLYRIVGRDDENIDKNDDTYQTQSYLAYAPRDAEKTSHAWHYISEQQPSDVLVIQLFDNEMEGHARAPLEGGKGKSDLGVGGAVHSAFELVDQDEDAEARESIEVRVAAFW</sequence>